<proteinExistence type="evidence at protein level"/>
<gene>
    <name type="primary">TMEM179B</name>
</gene>
<keyword id="KW-0472">Membrane</keyword>
<keyword id="KW-0597">Phosphoprotein</keyword>
<keyword id="KW-1267">Proteomics identification</keyword>
<keyword id="KW-1185">Reference proteome</keyword>
<keyword id="KW-0812">Transmembrane</keyword>
<keyword id="KW-1133">Transmembrane helix</keyword>
<organism>
    <name type="scientific">Homo sapiens</name>
    <name type="common">Human</name>
    <dbReference type="NCBI Taxonomy" id="9606"/>
    <lineage>
        <taxon>Eukaryota</taxon>
        <taxon>Metazoa</taxon>
        <taxon>Chordata</taxon>
        <taxon>Craniata</taxon>
        <taxon>Vertebrata</taxon>
        <taxon>Euteleostomi</taxon>
        <taxon>Mammalia</taxon>
        <taxon>Eutheria</taxon>
        <taxon>Euarchontoglires</taxon>
        <taxon>Primates</taxon>
        <taxon>Haplorrhini</taxon>
        <taxon>Catarrhini</taxon>
        <taxon>Hominidae</taxon>
        <taxon>Homo</taxon>
    </lineage>
</organism>
<protein>
    <recommendedName>
        <fullName>Transmembrane protein 179B</fullName>
    </recommendedName>
</protein>
<comment type="interaction">
    <interactant intactId="EBI-11724423">
        <id>Q7Z7N9</id>
    </interactant>
    <interactant intactId="EBI-10827839">
        <id>Q15848</id>
        <label>ADIPOQ</label>
    </interactant>
    <organismsDiffer>false</organismsDiffer>
    <experiments>3</experiments>
</comment>
<comment type="interaction">
    <interactant intactId="EBI-11724423">
        <id>Q7Z7N9</id>
    </interactant>
    <interactant intactId="EBI-4290634">
        <id>Q9BQE5</id>
        <label>APOL2</label>
    </interactant>
    <organismsDiffer>false</organismsDiffer>
    <experiments>3</experiments>
</comment>
<comment type="interaction">
    <interactant intactId="EBI-11724423">
        <id>Q7Z7N9</id>
    </interactant>
    <interactant intactId="EBI-707714">
        <id>Q92843</id>
        <label>BCL2L2</label>
    </interactant>
    <organismsDiffer>false</organismsDiffer>
    <experiments>3</experiments>
</comment>
<comment type="interaction">
    <interactant intactId="EBI-11724423">
        <id>Q7Z7N9</id>
    </interactant>
    <interactant intactId="EBI-8648738">
        <id>Q8WVV5</id>
        <label>BTN2A2</label>
    </interactant>
    <organismsDiffer>false</organismsDiffer>
    <experiments>3</experiments>
</comment>
<comment type="interaction">
    <interactant intactId="EBI-11724423">
        <id>Q7Z7N9</id>
    </interactant>
    <interactant intactId="EBI-12062109">
        <id>Q86Z23</id>
        <label>C1QL4</label>
    </interactant>
    <organismsDiffer>false</organismsDiffer>
    <experiments>3</experiments>
</comment>
<comment type="interaction">
    <interactant intactId="EBI-11724423">
        <id>Q7Z7N9</id>
    </interactant>
    <interactant intactId="EBI-12822627">
        <id>O14523</id>
        <label>C2CD2L</label>
    </interactant>
    <organismsDiffer>false</organismsDiffer>
    <experiments>3</experiments>
</comment>
<comment type="interaction">
    <interactant intactId="EBI-11724423">
        <id>Q7Z7N9</id>
    </interactant>
    <interactant intactId="EBI-9083477">
        <id>Q9P0B6</id>
        <label>CCDC167</label>
    </interactant>
    <organismsDiffer>false</organismsDiffer>
    <experiments>3</experiments>
</comment>
<comment type="interaction">
    <interactant intactId="EBI-11724423">
        <id>Q7Z7N9</id>
    </interactant>
    <interactant intactId="EBI-12934095">
        <id>P16619</id>
        <label>CCL3L3</label>
    </interactant>
    <organismsDiffer>false</organismsDiffer>
    <experiments>3</experiments>
</comment>
<comment type="interaction">
    <interactant intactId="EBI-11724423">
        <id>Q7Z7N9</id>
    </interactant>
    <interactant intactId="EBI-2873970">
        <id>P13236</id>
        <label>CCL4</label>
    </interactant>
    <organismsDiffer>false</organismsDiffer>
    <experiments>3</experiments>
</comment>
<comment type="interaction">
    <interactant intactId="EBI-11724423">
        <id>Q7Z7N9</id>
    </interactant>
    <interactant intactId="EBI-10271156">
        <id>Q8NHW4</id>
        <label>CCL4L2</label>
    </interactant>
    <organismsDiffer>false</organismsDiffer>
    <experiments>3</experiments>
</comment>
<comment type="interaction">
    <interactant intactId="EBI-11724423">
        <id>Q7Z7N9</id>
    </interactant>
    <interactant intactId="EBI-2826276">
        <id>P34810</id>
        <label>CD68</label>
    </interactant>
    <organismsDiffer>false</organismsDiffer>
    <experiments>3</experiments>
</comment>
<comment type="interaction">
    <interactant intactId="EBI-11724423">
        <id>Q7Z7N9</id>
    </interactant>
    <interactant intactId="EBI-4402346">
        <id>P51798</id>
        <label>CLCN7</label>
    </interactant>
    <organismsDiffer>false</organismsDiffer>
    <experiments>3</experiments>
</comment>
<comment type="interaction">
    <interactant intactId="EBI-11724423">
        <id>Q7Z7N9</id>
    </interactant>
    <interactant intactId="EBI-723889">
        <id>O95832</id>
        <label>CLDN1</label>
    </interactant>
    <organismsDiffer>false</organismsDiffer>
    <experiments>3</experiments>
</comment>
<comment type="interaction">
    <interactant intactId="EBI-11724423">
        <id>Q7Z7N9</id>
    </interactant>
    <interactant intactId="EBI-12955011">
        <id>P56747</id>
        <label>CLDN6</label>
    </interactant>
    <organismsDiffer>false</organismsDiffer>
    <experiments>3</experiments>
</comment>
<comment type="interaction">
    <interactant intactId="EBI-11724423">
        <id>Q7Z7N9</id>
    </interactant>
    <interactant intactId="EBI-12019274">
        <id>Q4LDR2</id>
        <label>CTXN3</label>
    </interactant>
    <organismsDiffer>false</organismsDiffer>
    <experiments>3</experiments>
</comment>
<comment type="interaction">
    <interactant intactId="EBI-11724423">
        <id>Q7Z7N9</id>
    </interactant>
    <interactant intactId="EBI-8646596">
        <id>P49447</id>
        <label>CYB561</label>
    </interactant>
    <organismsDiffer>false</organismsDiffer>
    <experiments>3</experiments>
</comment>
<comment type="interaction">
    <interactant intactId="EBI-11724423">
        <id>Q7Z7N9</id>
    </interactant>
    <interactant intactId="EBI-12831318">
        <id>Q96Q80</id>
        <label>DERL3</label>
    </interactant>
    <organismsDiffer>false</organismsDiffer>
    <experiments>3</experiments>
</comment>
<comment type="interaction">
    <interactant intactId="EBI-11724423">
        <id>Q7Z7N9</id>
    </interactant>
    <interactant intactId="EBI-781551">
        <id>Q9Y282</id>
        <label>ERGIC3</label>
    </interactant>
    <organismsDiffer>false</organismsDiffer>
    <experiments>3</experiments>
</comment>
<comment type="interaction">
    <interactant intactId="EBI-11724423">
        <id>Q7Z7N9</id>
    </interactant>
    <interactant intactId="EBI-11793142">
        <id>Q96GL9</id>
        <label>FAM163A</label>
    </interactant>
    <organismsDiffer>false</organismsDiffer>
    <experiments>3</experiments>
</comment>
<comment type="interaction">
    <interactant intactId="EBI-11724423">
        <id>Q7Z7N9</id>
    </interactant>
    <interactant intactId="EBI-743099">
        <id>Q969F0</id>
        <label>FATE1</label>
    </interactant>
    <organismsDiffer>false</organismsDiffer>
    <experiments>3</experiments>
</comment>
<comment type="interaction">
    <interactant intactId="EBI-11724423">
        <id>Q7Z7N9</id>
    </interactant>
    <interactant intactId="EBI-12175685">
        <id>Q14802-3</id>
        <label>FXYD3</label>
    </interactant>
    <organismsDiffer>false</organismsDiffer>
    <experiments>3</experiments>
</comment>
<comment type="interaction">
    <interactant intactId="EBI-11724423">
        <id>Q7Z7N9</id>
    </interactant>
    <interactant intactId="EBI-3925203">
        <id>Q8N3T1</id>
        <label>GALNT15</label>
    </interactant>
    <organismsDiffer>false</organismsDiffer>
    <experiments>3</experiments>
</comment>
<comment type="interaction">
    <interactant intactId="EBI-11724423">
        <id>Q7Z7N9</id>
    </interactant>
    <interactant intactId="EBI-3933251">
        <id>Q9NS71</id>
        <label>GKN1</label>
    </interactant>
    <organismsDiffer>false</organismsDiffer>
    <experiments>3</experiments>
</comment>
<comment type="interaction">
    <interactant intactId="EBI-11724423">
        <id>Q7Z7N9</id>
    </interactant>
    <interactant intactId="EBI-11659720">
        <id>Q86YW7</id>
        <label>GPHB5</label>
    </interactant>
    <organismsDiffer>false</organismsDiffer>
    <experiments>3</experiments>
</comment>
<comment type="interaction">
    <interactant intactId="EBI-11724423">
        <id>Q7Z7N9</id>
    </interactant>
    <interactant intactId="EBI-11955647">
        <id>Q8TDV0</id>
        <label>GPR151</label>
    </interactant>
    <organismsDiffer>false</organismsDiffer>
    <experiments>3</experiments>
</comment>
<comment type="interaction">
    <interactant intactId="EBI-11724423">
        <id>Q7Z7N9</id>
    </interactant>
    <interactant intactId="EBI-12244272">
        <id>Q02747</id>
        <label>GUCA2A</label>
    </interactant>
    <organismsDiffer>false</organismsDiffer>
    <experiments>3</experiments>
</comment>
<comment type="interaction">
    <interactant intactId="EBI-11724423">
        <id>Q7Z7N9</id>
    </interactant>
    <interactant intactId="EBI-720480">
        <id>P24593</id>
        <label>IGFBP5</label>
    </interactant>
    <organismsDiffer>false</organismsDiffer>
    <experiments>3</experiments>
</comment>
<comment type="interaction">
    <interactant intactId="EBI-11724423">
        <id>Q7Z7N9</id>
    </interactant>
    <interactant intactId="EBI-2431769">
        <id>O43736</id>
        <label>ITM2A</label>
    </interactant>
    <organismsDiffer>false</organismsDiffer>
    <experiments>3</experiments>
</comment>
<comment type="interaction">
    <interactant intactId="EBI-11724423">
        <id>Q7Z7N9</id>
    </interactant>
    <interactant intactId="EBI-10176379">
        <id>P59991</id>
        <label>KRTAP12-2</label>
    </interactant>
    <organismsDiffer>false</organismsDiffer>
    <experiments>3</experiments>
</comment>
<comment type="interaction">
    <interactant intactId="EBI-11724423">
        <id>Q7Z7N9</id>
    </interactant>
    <interactant intactId="EBI-12007212">
        <id>Q86UP2-3</id>
        <label>KTN1</label>
    </interactant>
    <organismsDiffer>false</organismsDiffer>
    <experiments>3</experiments>
</comment>
<comment type="interaction">
    <interactant intactId="EBI-11724423">
        <id>Q7Z7N9</id>
    </interactant>
    <interactant intactId="EBI-2830349">
        <id>Q7Z4F1</id>
        <label>LRP10</label>
    </interactant>
    <organismsDiffer>false</organismsDiffer>
    <experiments>3</experiments>
</comment>
<comment type="interaction">
    <interactant intactId="EBI-11724423">
        <id>Q7Z7N9</id>
    </interactant>
    <interactant intactId="EBI-13309213">
        <id>Q8N1E2</id>
        <label>LYG1</label>
    </interactant>
    <organismsDiffer>false</organismsDiffer>
    <experiments>3</experiments>
</comment>
<comment type="interaction">
    <interactant intactId="EBI-11724423">
        <id>Q7Z7N9</id>
    </interactant>
    <interactant intactId="EBI-10317612">
        <id>Q9P0N8</id>
        <label>MARCHF2</label>
    </interactant>
    <organismsDiffer>false</organismsDiffer>
    <experiments>3</experiments>
</comment>
<comment type="interaction">
    <interactant intactId="EBI-11724423">
        <id>Q7Z7N9</id>
    </interactant>
    <interactant intactId="EBI-3920969">
        <id>Q6N075</id>
        <label>MFSD5</label>
    </interactant>
    <organismsDiffer>false</organismsDiffer>
    <experiments>3</experiments>
</comment>
<comment type="interaction">
    <interactant intactId="EBI-11724423">
        <id>Q7Z7N9</id>
    </interactant>
    <interactant intactId="EBI-2858252">
        <id>Q6ZSS7</id>
        <label>MFSD6</label>
    </interactant>
    <organismsDiffer>false</organismsDiffer>
    <experiments>3</experiments>
</comment>
<comment type="interaction">
    <interactant intactId="EBI-11724423">
        <id>Q7Z7N9</id>
    </interactant>
    <interactant intactId="EBI-692836">
        <id>P26678</id>
        <label>PLN</label>
    </interactant>
    <organismsDiffer>false</organismsDiffer>
    <experiments>3</experiments>
</comment>
<comment type="interaction">
    <interactant intactId="EBI-11724423">
        <id>Q7Z7N9</id>
    </interactant>
    <interactant intactId="EBI-749270">
        <id>Q8N6R1</id>
        <label>SERP2</label>
    </interactant>
    <organismsDiffer>false</organismsDiffer>
    <experiments>3</experiments>
</comment>
<comment type="interaction">
    <interactant intactId="EBI-11724423">
        <id>Q7Z7N9</id>
    </interactant>
    <interactant intactId="EBI-745376">
        <id>P43005</id>
        <label>SLC1A1</label>
    </interactant>
    <organismsDiffer>false</organismsDiffer>
    <experiments>3</experiments>
</comment>
<comment type="interaction">
    <interactant intactId="EBI-11724423">
        <id>Q7Z7N9</id>
    </interactant>
    <interactant intactId="EBI-12904614">
        <id>Q9NWF4</id>
        <label>SLC52A1</label>
    </interactant>
    <organismsDiffer>false</organismsDiffer>
    <experiments>3</experiments>
</comment>
<comment type="interaction">
    <interactant intactId="EBI-11724423">
        <id>Q7Z7N9</id>
    </interactant>
    <interactant intactId="EBI-727240">
        <id>Q9UNK0</id>
        <label>STX8</label>
    </interactant>
    <organismsDiffer>false</organismsDiffer>
    <experiments>3</experiments>
</comment>
<comment type="interaction">
    <interactant intactId="EBI-11724423">
        <id>Q7Z7N9</id>
    </interactant>
    <interactant intactId="EBI-6448756">
        <id>Q96DZ7</id>
        <label>TM4SF19</label>
    </interactant>
    <organismsDiffer>false</organismsDiffer>
    <experiments>3</experiments>
</comment>
<comment type="interaction">
    <interactant intactId="EBI-11724423">
        <id>Q7Z7N9</id>
    </interactant>
    <interactant intactId="EBI-2800360">
        <id>Q9Y6G1</id>
        <label>TMEM14A</label>
    </interactant>
    <organismsDiffer>false</organismsDiffer>
    <experiments>3</experiments>
</comment>
<comment type="interaction">
    <interactant intactId="EBI-11724423">
        <id>Q7Z7N9</id>
    </interactant>
    <interactant intactId="EBI-13378608">
        <id>Q5W0B7</id>
        <label>TMEM236</label>
    </interactant>
    <organismsDiffer>false</organismsDiffer>
    <experiments>3</experiments>
</comment>
<comment type="interaction">
    <interactant intactId="EBI-11724423">
        <id>Q7Z7N9</id>
    </interactant>
    <interactant intactId="EBI-10982110">
        <id>Q96Q45-2</id>
        <label>TMEM237</label>
    </interactant>
    <organismsDiffer>false</organismsDiffer>
    <experiments>3</experiments>
</comment>
<comment type="interaction">
    <interactant intactId="EBI-11724423">
        <id>Q7Z7N9</id>
    </interactant>
    <interactant intactId="EBI-10315004">
        <id>Q9NWH2</id>
        <label>TMEM242</label>
    </interactant>
    <organismsDiffer>false</organismsDiffer>
    <experiments>3</experiments>
</comment>
<comment type="interaction">
    <interactant intactId="EBI-11724423">
        <id>Q7Z7N9</id>
    </interactant>
    <interactant intactId="EBI-13370320">
        <id>Q9BQJ4</id>
        <label>TMEM47</label>
    </interactant>
    <organismsDiffer>false</organismsDiffer>
    <experiments>3</experiments>
</comment>
<comment type="interaction">
    <interactant intactId="EBI-11724423">
        <id>Q7Z7N9</id>
    </interactant>
    <interactant intactId="EBI-10243654">
        <id>Q5BVD1</id>
        <label>TTMP</label>
    </interactant>
    <organismsDiffer>false</organismsDiffer>
    <experiments>3</experiments>
</comment>
<comment type="interaction">
    <interactant intactId="EBI-11724423">
        <id>Q7Z7N9</id>
    </interactant>
    <interactant intactId="EBI-11988865">
        <id>A5PKU2</id>
        <label>TUSC5</label>
    </interactant>
    <organismsDiffer>false</organismsDiffer>
    <experiments>3</experiments>
</comment>
<comment type="subcellular location">
    <subcellularLocation>
        <location evidence="3">Membrane</location>
        <topology evidence="3">Multi-pass membrane protein</topology>
    </subcellularLocation>
</comment>
<comment type="similarity">
    <text evidence="3">Belongs to the TMEM179 family.</text>
</comment>
<feature type="chain" id="PRO_0000328987" description="Transmembrane protein 179B">
    <location>
        <begin position="1"/>
        <end position="219"/>
    </location>
</feature>
<feature type="transmembrane region" description="Helical" evidence="1">
    <location>
        <begin position="9"/>
        <end position="29"/>
    </location>
</feature>
<feature type="transmembrane region" description="Helical" evidence="1">
    <location>
        <begin position="65"/>
        <end position="85"/>
    </location>
</feature>
<feature type="transmembrane region" description="Helical" evidence="1">
    <location>
        <begin position="96"/>
        <end position="116"/>
    </location>
</feature>
<feature type="transmembrane region" description="Helical" evidence="1">
    <location>
        <begin position="167"/>
        <end position="187"/>
    </location>
</feature>
<feature type="region of interest" description="Disordered" evidence="2">
    <location>
        <begin position="198"/>
        <end position="219"/>
    </location>
</feature>
<feature type="modified residue" description="Phosphoserine" evidence="4 5">
    <location>
        <position position="206"/>
    </location>
</feature>
<feature type="modified residue" description="Phosphoserine" evidence="5">
    <location>
        <position position="214"/>
    </location>
</feature>
<dbReference type="EMBL" id="CH471076">
    <property type="protein sequence ID" value="EAW74098.1"/>
    <property type="molecule type" value="Genomic_DNA"/>
</dbReference>
<dbReference type="EMBL" id="BC051355">
    <property type="protein sequence ID" value="AAH51355.1"/>
    <property type="molecule type" value="mRNA"/>
</dbReference>
<dbReference type="CCDS" id="CCDS8036.1"/>
<dbReference type="RefSeq" id="NP_955369.1">
    <property type="nucleotide sequence ID" value="NM_199337.3"/>
</dbReference>
<dbReference type="BioGRID" id="131898">
    <property type="interactions" value="106"/>
</dbReference>
<dbReference type="FunCoup" id="Q7Z7N9">
    <property type="interactions" value="734"/>
</dbReference>
<dbReference type="IntAct" id="Q7Z7N9">
    <property type="interactions" value="89"/>
</dbReference>
<dbReference type="MINT" id="Q7Z7N9"/>
<dbReference type="STRING" id="9606.ENSP00000333697"/>
<dbReference type="TCDB" id="9.B.201.1.2">
    <property type="family name" value="the 4 tms tmem179 (tmem179) family"/>
</dbReference>
<dbReference type="GlyGen" id="Q7Z7N9">
    <property type="glycosylation" value="3 sites, 2 N-linked glycans (2 sites), 1 O-linked glycan (1 site)"/>
</dbReference>
<dbReference type="iPTMnet" id="Q7Z7N9"/>
<dbReference type="PhosphoSitePlus" id="Q7Z7N9"/>
<dbReference type="SwissPalm" id="Q7Z7N9"/>
<dbReference type="BioMuta" id="TMEM179B"/>
<dbReference type="DMDM" id="74738902"/>
<dbReference type="jPOST" id="Q7Z7N9"/>
<dbReference type="MassIVE" id="Q7Z7N9"/>
<dbReference type="PaxDb" id="9606-ENSP00000333697"/>
<dbReference type="PeptideAtlas" id="Q7Z7N9"/>
<dbReference type="ProteomicsDB" id="69572"/>
<dbReference type="Pumba" id="Q7Z7N9"/>
<dbReference type="Antibodypedia" id="14985">
    <property type="antibodies" value="18 antibodies from 9 providers"/>
</dbReference>
<dbReference type="DNASU" id="374395"/>
<dbReference type="Ensembl" id="ENST00000333449.9">
    <property type="protein sequence ID" value="ENSP00000333697.3"/>
    <property type="gene ID" value="ENSG00000185475.11"/>
</dbReference>
<dbReference type="GeneID" id="374395"/>
<dbReference type="KEGG" id="hsa:374395"/>
<dbReference type="MANE-Select" id="ENST00000333449.9">
    <property type="protein sequence ID" value="ENSP00000333697.3"/>
    <property type="RefSeq nucleotide sequence ID" value="NM_199337.3"/>
    <property type="RefSeq protein sequence ID" value="NP_955369.1"/>
</dbReference>
<dbReference type="UCSC" id="uc001nvd.5">
    <property type="organism name" value="human"/>
</dbReference>
<dbReference type="AGR" id="HGNC:33744"/>
<dbReference type="CTD" id="374395"/>
<dbReference type="DisGeNET" id="374395"/>
<dbReference type="GeneCards" id="TMEM179B"/>
<dbReference type="HGNC" id="HGNC:33744">
    <property type="gene designation" value="TMEM179B"/>
</dbReference>
<dbReference type="HPA" id="ENSG00000185475">
    <property type="expression patterns" value="Low tissue specificity"/>
</dbReference>
<dbReference type="neXtProt" id="NX_Q7Z7N9"/>
<dbReference type="OpenTargets" id="ENSG00000185475"/>
<dbReference type="PharmGKB" id="PA162405996"/>
<dbReference type="VEuPathDB" id="HostDB:ENSG00000185475"/>
<dbReference type="eggNOG" id="ENOG502S28I">
    <property type="taxonomic scope" value="Eukaryota"/>
</dbReference>
<dbReference type="GeneTree" id="ENSGT00510000048151"/>
<dbReference type="HOGENOM" id="CLU_109636_0_0_1"/>
<dbReference type="InParanoid" id="Q7Z7N9"/>
<dbReference type="OMA" id="YWVYTFC"/>
<dbReference type="OrthoDB" id="8914435at2759"/>
<dbReference type="PAN-GO" id="Q7Z7N9">
    <property type="GO annotations" value="0 GO annotations based on evolutionary models"/>
</dbReference>
<dbReference type="PhylomeDB" id="Q7Z7N9"/>
<dbReference type="TreeFam" id="TF324841"/>
<dbReference type="PathwayCommons" id="Q7Z7N9"/>
<dbReference type="Reactome" id="R-HSA-6798695">
    <property type="pathway name" value="Neutrophil degranulation"/>
</dbReference>
<dbReference type="SignaLink" id="Q7Z7N9"/>
<dbReference type="BioGRID-ORCS" id="374395">
    <property type="hits" value="22 hits in 1162 CRISPR screens"/>
</dbReference>
<dbReference type="ChiTaRS" id="TMEM179B">
    <property type="organism name" value="human"/>
</dbReference>
<dbReference type="GenomeRNAi" id="374395"/>
<dbReference type="Pharos" id="Q7Z7N9">
    <property type="development level" value="Tdark"/>
</dbReference>
<dbReference type="PRO" id="PR:Q7Z7N9"/>
<dbReference type="Proteomes" id="UP000005640">
    <property type="component" value="Chromosome 11"/>
</dbReference>
<dbReference type="RNAct" id="Q7Z7N9">
    <property type="molecule type" value="protein"/>
</dbReference>
<dbReference type="Bgee" id="ENSG00000185475">
    <property type="expression patterns" value="Expressed in mucosa of transverse colon and 96 other cell types or tissues"/>
</dbReference>
<dbReference type="ExpressionAtlas" id="Q7Z7N9">
    <property type="expression patterns" value="baseline and differential"/>
</dbReference>
<dbReference type="GO" id="GO:0035577">
    <property type="term" value="C:azurophil granule membrane"/>
    <property type="evidence" value="ECO:0000304"/>
    <property type="project" value="Reactome"/>
</dbReference>
<dbReference type="GO" id="GO:0101003">
    <property type="term" value="C:ficolin-1-rich granule membrane"/>
    <property type="evidence" value="ECO:0000304"/>
    <property type="project" value="Reactome"/>
</dbReference>
<dbReference type="GO" id="GO:0016607">
    <property type="term" value="C:nuclear speck"/>
    <property type="evidence" value="ECO:0000314"/>
    <property type="project" value="HPA"/>
</dbReference>
<dbReference type="GO" id="GO:0005730">
    <property type="term" value="C:nucleolus"/>
    <property type="evidence" value="ECO:0000314"/>
    <property type="project" value="HPA"/>
</dbReference>
<dbReference type="GO" id="GO:0005886">
    <property type="term" value="C:plasma membrane"/>
    <property type="evidence" value="ECO:0000304"/>
    <property type="project" value="Reactome"/>
</dbReference>
<dbReference type="GO" id="GO:0030667">
    <property type="term" value="C:secretory granule membrane"/>
    <property type="evidence" value="ECO:0000304"/>
    <property type="project" value="Reactome"/>
</dbReference>
<dbReference type="InterPro" id="IPR029776">
    <property type="entry name" value="TMEM179B"/>
</dbReference>
<dbReference type="PANTHER" id="PTHR31056">
    <property type="entry name" value="TRANSMEMBRANE PROTEIN 179B"/>
    <property type="match status" value="1"/>
</dbReference>
<dbReference type="PANTHER" id="PTHR31056:SF1">
    <property type="entry name" value="TRANSMEMBRANE PROTEIN 179B"/>
    <property type="match status" value="1"/>
</dbReference>
<sequence>MALSWLQRVELALFAAAFLCGAVAAAAMTRTQGSFSGRCPLYGVATLNGSSLALSRPSAPSLCYFVAGASGLLALYCLLLLLFWIYSSCIEDSHRGAIGLRIALAISAIAVFLVLVSACILRFGTRSLCNSIISLNTTISCSEAQKIPWTPPGTALQFYSNLHNAETSSWVNLVLWCVVLVLQVVQWKSEATPYRPLERGDPEWSSETDALVGSRLSHS</sequence>
<reference key="1">
    <citation type="submission" date="2005-07" db="EMBL/GenBank/DDBJ databases">
        <authorList>
            <person name="Mural R.J."/>
            <person name="Istrail S."/>
            <person name="Sutton G.G."/>
            <person name="Florea L."/>
            <person name="Halpern A.L."/>
            <person name="Mobarry C.M."/>
            <person name="Lippert R."/>
            <person name="Walenz B."/>
            <person name="Shatkay H."/>
            <person name="Dew I."/>
            <person name="Miller J.R."/>
            <person name="Flanigan M.J."/>
            <person name="Edwards N.J."/>
            <person name="Bolanos R."/>
            <person name="Fasulo D."/>
            <person name="Halldorsson B.V."/>
            <person name="Hannenhalli S."/>
            <person name="Turner R."/>
            <person name="Yooseph S."/>
            <person name="Lu F."/>
            <person name="Nusskern D.R."/>
            <person name="Shue B.C."/>
            <person name="Zheng X.H."/>
            <person name="Zhong F."/>
            <person name="Delcher A.L."/>
            <person name="Huson D.H."/>
            <person name="Kravitz S.A."/>
            <person name="Mouchard L."/>
            <person name="Reinert K."/>
            <person name="Remington K.A."/>
            <person name="Clark A.G."/>
            <person name="Waterman M.S."/>
            <person name="Eichler E.E."/>
            <person name="Adams M.D."/>
            <person name="Hunkapiller M.W."/>
            <person name="Myers E.W."/>
            <person name="Venter J.C."/>
        </authorList>
    </citation>
    <scope>NUCLEOTIDE SEQUENCE [LARGE SCALE GENOMIC DNA]</scope>
</reference>
<reference key="2">
    <citation type="journal article" date="2004" name="Genome Res.">
        <title>The status, quality, and expansion of the NIH full-length cDNA project: the Mammalian Gene Collection (MGC).</title>
        <authorList>
            <consortium name="The MGC Project Team"/>
        </authorList>
    </citation>
    <scope>NUCLEOTIDE SEQUENCE [LARGE SCALE MRNA]</scope>
    <source>
        <tissue>Ovary</tissue>
    </source>
</reference>
<reference key="3">
    <citation type="journal article" date="2009" name="Sci. Signal.">
        <title>Quantitative phosphoproteomic analysis of T cell receptor signaling reveals system-wide modulation of protein-protein interactions.</title>
        <authorList>
            <person name="Mayya V."/>
            <person name="Lundgren D.H."/>
            <person name="Hwang S.-I."/>
            <person name="Rezaul K."/>
            <person name="Wu L."/>
            <person name="Eng J.K."/>
            <person name="Rodionov V."/>
            <person name="Han D.K."/>
        </authorList>
    </citation>
    <scope>PHOSPHORYLATION [LARGE SCALE ANALYSIS] AT SER-206</scope>
    <scope>IDENTIFICATION BY MASS SPECTROMETRY [LARGE SCALE ANALYSIS]</scope>
    <source>
        <tissue>Leukemic T-cell</tissue>
    </source>
</reference>
<reference key="4">
    <citation type="journal article" date="2013" name="J. Proteome Res.">
        <title>Toward a comprehensive characterization of a human cancer cell phosphoproteome.</title>
        <authorList>
            <person name="Zhou H."/>
            <person name="Di Palma S."/>
            <person name="Preisinger C."/>
            <person name="Peng M."/>
            <person name="Polat A.N."/>
            <person name="Heck A.J."/>
            <person name="Mohammed S."/>
        </authorList>
    </citation>
    <scope>PHOSPHORYLATION [LARGE SCALE ANALYSIS] AT SER-206 AND SER-214</scope>
    <scope>IDENTIFICATION BY MASS SPECTROMETRY [LARGE SCALE ANALYSIS]</scope>
    <source>
        <tissue>Cervix carcinoma</tissue>
        <tissue>Erythroleukemia</tissue>
    </source>
</reference>
<accession>Q7Z7N9</accession>
<name>T179B_HUMAN</name>
<evidence type="ECO:0000255" key="1"/>
<evidence type="ECO:0000256" key="2">
    <source>
        <dbReference type="SAM" id="MobiDB-lite"/>
    </source>
</evidence>
<evidence type="ECO:0000305" key="3"/>
<evidence type="ECO:0007744" key="4">
    <source>
    </source>
</evidence>
<evidence type="ECO:0007744" key="5">
    <source>
    </source>
</evidence>